<name>PFF1_KLULA</name>
<comment type="function">
    <text evidence="1">May be involved in vacuolar sorting and osmoregulation.</text>
</comment>
<comment type="cofactor">
    <cofactor evidence="2">
        <name>Zn(2+)</name>
        <dbReference type="ChEBI" id="CHEBI:29105"/>
    </cofactor>
    <text evidence="2">Binds 2 Zn(2+) ions per subunit.</text>
</comment>
<comment type="subcellular location">
    <subcellularLocation>
        <location evidence="1">Vacuole membrane</location>
        <topology evidence="3">Multi-pass membrane protein</topology>
    </subcellularLocation>
</comment>
<comment type="similarity">
    <text evidence="6">Belongs to the peptidase M28 family.</text>
</comment>
<organism>
    <name type="scientific">Kluyveromyces lactis (strain ATCC 8585 / CBS 2359 / DSM 70799 / NBRC 1267 / NRRL Y-1140 / WM37)</name>
    <name type="common">Yeast</name>
    <name type="synonym">Candida sphaerica</name>
    <dbReference type="NCBI Taxonomy" id="284590"/>
    <lineage>
        <taxon>Eukaryota</taxon>
        <taxon>Fungi</taxon>
        <taxon>Dikarya</taxon>
        <taxon>Ascomycota</taxon>
        <taxon>Saccharomycotina</taxon>
        <taxon>Saccharomycetes</taxon>
        <taxon>Saccharomycetales</taxon>
        <taxon>Saccharomycetaceae</taxon>
        <taxon>Kluyveromyces</taxon>
    </lineage>
</organism>
<feature type="chain" id="PRO_0000411717" description="Vacuolar membrane protease">
    <location>
        <begin position="1"/>
        <end position="913"/>
    </location>
</feature>
<feature type="topological domain" description="Cytoplasmic" evidence="1">
    <location>
        <begin position="1"/>
        <end position="15"/>
    </location>
</feature>
<feature type="transmembrane region" description="Helical; Name=1" evidence="3">
    <location>
        <begin position="16"/>
        <end position="36"/>
    </location>
</feature>
<feature type="topological domain" description="Vacuolar" evidence="1">
    <location>
        <begin position="37"/>
        <end position="364"/>
    </location>
</feature>
<feature type="transmembrane region" description="Helical; Name=2" evidence="3">
    <location>
        <begin position="365"/>
        <end position="385"/>
    </location>
</feature>
<feature type="topological domain" description="Cytoplasmic" evidence="1">
    <location>
        <begin position="386"/>
        <end position="394"/>
    </location>
</feature>
<feature type="transmembrane region" description="Helical; Name=3" evidence="3">
    <location>
        <begin position="395"/>
        <end position="415"/>
    </location>
</feature>
<feature type="topological domain" description="Vacuolar" evidence="1">
    <location>
        <begin position="416"/>
        <end position="431"/>
    </location>
</feature>
<feature type="transmembrane region" description="Helical; Name=4" evidence="3">
    <location>
        <begin position="432"/>
        <end position="452"/>
    </location>
</feature>
<feature type="topological domain" description="Cytoplasmic" evidence="1">
    <location>
        <begin position="453"/>
        <end position="465"/>
    </location>
</feature>
<feature type="transmembrane region" description="Helical; Name=5" evidence="3">
    <location>
        <begin position="466"/>
        <end position="486"/>
    </location>
</feature>
<feature type="topological domain" description="Vacuolar" evidence="1">
    <location>
        <begin position="487"/>
        <end position="494"/>
    </location>
</feature>
<feature type="transmembrane region" description="Helical; Name=6" evidence="3">
    <location>
        <begin position="495"/>
        <end position="515"/>
    </location>
</feature>
<feature type="topological domain" description="Cytoplasmic" evidence="1">
    <location>
        <begin position="516"/>
        <end position="600"/>
    </location>
</feature>
<feature type="transmembrane region" description="Helical; Name=7" evidence="3">
    <location>
        <begin position="601"/>
        <end position="621"/>
    </location>
</feature>
<feature type="topological domain" description="Vacuolar" evidence="1">
    <location>
        <begin position="622"/>
        <end position="634"/>
    </location>
</feature>
<feature type="transmembrane region" description="Helical; Name=8" evidence="3">
    <location>
        <begin position="635"/>
        <end position="655"/>
    </location>
</feature>
<feature type="topological domain" description="Cytoplasmic" evidence="1">
    <location>
        <begin position="656"/>
        <end position="660"/>
    </location>
</feature>
<feature type="transmembrane region" description="Helical; Name=9" evidence="3">
    <location>
        <begin position="661"/>
        <end position="681"/>
    </location>
</feature>
<feature type="topological domain" description="Vacuolar" evidence="1">
    <location>
        <begin position="682"/>
        <end position="913"/>
    </location>
</feature>
<feature type="region of interest" description="Disordered" evidence="5">
    <location>
        <begin position="540"/>
        <end position="578"/>
    </location>
</feature>
<feature type="compositionally biased region" description="Basic and acidic residues" evidence="5">
    <location>
        <begin position="540"/>
        <end position="552"/>
    </location>
</feature>
<feature type="compositionally biased region" description="Polar residues" evidence="5">
    <location>
        <begin position="557"/>
        <end position="566"/>
    </location>
</feature>
<feature type="compositionally biased region" description="Low complexity" evidence="5">
    <location>
        <begin position="567"/>
        <end position="578"/>
    </location>
</feature>
<feature type="active site" description="Proton acceptor" evidence="2">
    <location>
        <position position="196"/>
    </location>
</feature>
<feature type="binding site" evidence="2">
    <location>
        <position position="152"/>
    </location>
    <ligand>
        <name>Zn(2+)</name>
        <dbReference type="ChEBI" id="CHEBI:29105"/>
        <label>1</label>
        <note>catalytic</note>
    </ligand>
</feature>
<feature type="binding site" evidence="2">
    <location>
        <position position="164"/>
    </location>
    <ligand>
        <name>Zn(2+)</name>
        <dbReference type="ChEBI" id="CHEBI:29105"/>
        <label>1</label>
        <note>catalytic</note>
    </ligand>
</feature>
<feature type="binding site" evidence="2">
    <location>
        <position position="164"/>
    </location>
    <ligand>
        <name>Zn(2+)</name>
        <dbReference type="ChEBI" id="CHEBI:29105"/>
        <label>2</label>
        <note>catalytic</note>
    </ligand>
</feature>
<feature type="binding site" evidence="2">
    <location>
        <position position="197"/>
    </location>
    <ligand>
        <name>Zn(2+)</name>
        <dbReference type="ChEBI" id="CHEBI:29105"/>
        <label>2</label>
        <note>catalytic</note>
    </ligand>
</feature>
<feature type="binding site" evidence="2">
    <location>
        <position position="222"/>
    </location>
    <ligand>
        <name>Zn(2+)</name>
        <dbReference type="ChEBI" id="CHEBI:29105"/>
        <label>1</label>
        <note>catalytic</note>
    </ligand>
</feature>
<feature type="binding site" evidence="2">
    <location>
        <position position="296"/>
    </location>
    <ligand>
        <name>Zn(2+)</name>
        <dbReference type="ChEBI" id="CHEBI:29105"/>
        <label>2</label>
        <note>catalytic</note>
    </ligand>
</feature>
<feature type="site" description="Transition state stabilizer" evidence="2">
    <location>
        <position position="295"/>
    </location>
</feature>
<feature type="glycosylation site" description="N-linked (GlcNAc...) asparagine" evidence="4">
    <location>
        <position position="117"/>
    </location>
</feature>
<feature type="glycosylation site" description="N-linked (GlcNAc...) asparagine" evidence="4">
    <location>
        <position position="729"/>
    </location>
</feature>
<feature type="glycosylation site" description="N-linked (GlcNAc...) asparagine" evidence="4">
    <location>
        <position position="794"/>
    </location>
</feature>
<feature type="glycosylation site" description="N-linked (GlcNAc...) asparagine" evidence="4">
    <location>
        <position position="810"/>
    </location>
</feature>
<accession>Q6CKC6</accession>
<reference key="1">
    <citation type="journal article" date="2004" name="Nature">
        <title>Genome evolution in yeasts.</title>
        <authorList>
            <person name="Dujon B."/>
            <person name="Sherman D."/>
            <person name="Fischer G."/>
            <person name="Durrens P."/>
            <person name="Casaregola S."/>
            <person name="Lafontaine I."/>
            <person name="de Montigny J."/>
            <person name="Marck C."/>
            <person name="Neuveglise C."/>
            <person name="Talla E."/>
            <person name="Goffard N."/>
            <person name="Frangeul L."/>
            <person name="Aigle M."/>
            <person name="Anthouard V."/>
            <person name="Babour A."/>
            <person name="Barbe V."/>
            <person name="Barnay S."/>
            <person name="Blanchin S."/>
            <person name="Beckerich J.-M."/>
            <person name="Beyne E."/>
            <person name="Bleykasten C."/>
            <person name="Boisrame A."/>
            <person name="Boyer J."/>
            <person name="Cattolico L."/>
            <person name="Confanioleri F."/>
            <person name="de Daruvar A."/>
            <person name="Despons L."/>
            <person name="Fabre E."/>
            <person name="Fairhead C."/>
            <person name="Ferry-Dumazet H."/>
            <person name="Groppi A."/>
            <person name="Hantraye F."/>
            <person name="Hennequin C."/>
            <person name="Jauniaux N."/>
            <person name="Joyet P."/>
            <person name="Kachouri R."/>
            <person name="Kerrest A."/>
            <person name="Koszul R."/>
            <person name="Lemaire M."/>
            <person name="Lesur I."/>
            <person name="Ma L."/>
            <person name="Muller H."/>
            <person name="Nicaud J.-M."/>
            <person name="Nikolski M."/>
            <person name="Oztas S."/>
            <person name="Ozier-Kalogeropoulos O."/>
            <person name="Pellenz S."/>
            <person name="Potier S."/>
            <person name="Richard G.-F."/>
            <person name="Straub M.-L."/>
            <person name="Suleau A."/>
            <person name="Swennen D."/>
            <person name="Tekaia F."/>
            <person name="Wesolowski-Louvel M."/>
            <person name="Westhof E."/>
            <person name="Wirth B."/>
            <person name="Zeniou-Meyer M."/>
            <person name="Zivanovic Y."/>
            <person name="Bolotin-Fukuhara M."/>
            <person name="Thierry A."/>
            <person name="Bouchier C."/>
            <person name="Caudron B."/>
            <person name="Scarpelli C."/>
            <person name="Gaillardin C."/>
            <person name="Weissenbach J."/>
            <person name="Wincker P."/>
            <person name="Souciet J.-L."/>
        </authorList>
    </citation>
    <scope>NUCLEOTIDE SEQUENCE [LARGE SCALE GENOMIC DNA]</scope>
    <source>
        <strain>ATCC 8585 / CBS 2359 / DSM 70799 / NBRC 1267 / NRRL Y-1140 / WM37</strain>
    </source>
</reference>
<protein>
    <recommendedName>
        <fullName evidence="1">Vacuolar membrane protease</fullName>
        <ecNumber evidence="6">3.4.-.-</ecNumber>
    </recommendedName>
    <alternativeName>
        <fullName evidence="1">FXNA-related family protease 1</fullName>
    </alternativeName>
</protein>
<keyword id="KW-0325">Glycoprotein</keyword>
<keyword id="KW-0378">Hydrolase</keyword>
<keyword id="KW-0472">Membrane</keyword>
<keyword id="KW-0479">Metal-binding</keyword>
<keyword id="KW-0482">Metalloprotease</keyword>
<keyword id="KW-0645">Protease</keyword>
<keyword id="KW-1185">Reference proteome</keyword>
<keyword id="KW-0812">Transmembrane</keyword>
<keyword id="KW-1133">Transmembrane helix</keyword>
<keyword id="KW-0926">Vacuole</keyword>
<keyword id="KW-0862">Zinc</keyword>
<evidence type="ECO:0000250" key="1">
    <source>
        <dbReference type="UniProtKB" id="P38244"/>
    </source>
</evidence>
<evidence type="ECO:0000250" key="2">
    <source>
        <dbReference type="UniProtKB" id="P80561"/>
    </source>
</evidence>
<evidence type="ECO:0000255" key="3"/>
<evidence type="ECO:0000255" key="4">
    <source>
        <dbReference type="PROSITE-ProRule" id="PRU00498"/>
    </source>
</evidence>
<evidence type="ECO:0000256" key="5">
    <source>
        <dbReference type="SAM" id="MobiDB-lite"/>
    </source>
</evidence>
<evidence type="ECO:0000305" key="6"/>
<proteinExistence type="inferred from homology"/>
<sequence length="913" mass="103763">MMANYFRSTFKFRKTTVSTLFVLTVLVISILTWFDANKYKSNLPDDKSSNSLLDAAWHDLQVITEKPHPYTSHFNDNVHDYLLQRVEQISKKSKFIEVSDDSANGVSKLFQHLDVFNDSSTETRLVYYESSNILVKVEGKSPQLPGLLLSAHFDSVPTGYGATDDGKGVVSLLALLQYYSENQPERTIVFNFNNNEEFGLLGATIFTYSEWFKLVSYVINLEGAGAGSKAALFRTSDTATALLYEKSVKDQPFGNSIYQQGFYSRFVSSETDYKIYELNGLRGWDIAFYKPRDMYHTGKDTVQHTSKAALWHMLNIAWQLSKYVVADQTTASQEILDDESNSSPAIYFDIISKWFFVVSARQLYVWNIVLLCVLPITLILLRIVCNKLGTWRMPTSALFTRIPFALFVSSFTIYFTKELLLQLNPTIWSRNFILPFLFCISEFLLINTLVLALFEYLWPIQDFKTLSLLELSAIAWLFLLKCTWDLSSSGFKATGVYPVTVFYLFISLASMFGLCSMCFGKRPNATNDYDNSEFMRPDTNDTHSIECPRQPEDSETTETSPLINTPSSSVQSSPIASSKSLPGAVQYLQRTLNYDWSAQYLLAVPINAFLIWESLFNLFDALSMTVQESNKATEAVFKFAIYGAIFLCSPLLPFTTKLNRFVVIILGVVTILAASFSLFAAPYTELAPLKLRFVQRIDISRETKQNVEIYGRAGANIQEVLSSLPSRPNVSCKDSGSGTELCVYEGMWPNFGIPMKVDVVKNTHNDKEHFEYEPYFADLRINVADNRLCLMKFNTTGKKHLKQVEFKVGNETTTHSYRTDEGIDSLLLHKLSWNVPYYDVQLKWIPQYTAEGSSDTLGVSIDCYWGEFDETIVNGQVVQKIPAYNELLQFLPETFIVSNRESGMVTIHKYLEL</sequence>
<gene>
    <name type="ordered locus">KLLA0F11748g</name>
</gene>
<dbReference type="EC" id="3.4.-.-" evidence="6"/>
<dbReference type="EMBL" id="CR382126">
    <property type="protein sequence ID" value="CAG98321.1"/>
    <property type="molecule type" value="Genomic_DNA"/>
</dbReference>
<dbReference type="RefSeq" id="XP_455613.1">
    <property type="nucleotide sequence ID" value="XM_455613.1"/>
</dbReference>
<dbReference type="SMR" id="Q6CKC6"/>
<dbReference type="FunCoup" id="Q6CKC6">
    <property type="interactions" value="24"/>
</dbReference>
<dbReference type="STRING" id="284590.Q6CKC6"/>
<dbReference type="MEROPS" id="M28.A05"/>
<dbReference type="PaxDb" id="284590-Q6CKC6"/>
<dbReference type="KEGG" id="kla:KLLA0_F11748g"/>
<dbReference type="eggNOG" id="KOG2194">
    <property type="taxonomic scope" value="Eukaryota"/>
</dbReference>
<dbReference type="HOGENOM" id="CLU_006412_1_0_1"/>
<dbReference type="InParanoid" id="Q6CKC6"/>
<dbReference type="OMA" id="TPWPVTI"/>
<dbReference type="Proteomes" id="UP000000598">
    <property type="component" value="Chromosome F"/>
</dbReference>
<dbReference type="GO" id="GO:0005774">
    <property type="term" value="C:vacuolar membrane"/>
    <property type="evidence" value="ECO:0007669"/>
    <property type="project" value="UniProtKB-SubCell"/>
</dbReference>
<dbReference type="GO" id="GO:0046872">
    <property type="term" value="F:metal ion binding"/>
    <property type="evidence" value="ECO:0007669"/>
    <property type="project" value="UniProtKB-KW"/>
</dbReference>
<dbReference type="GO" id="GO:0008235">
    <property type="term" value="F:metalloexopeptidase activity"/>
    <property type="evidence" value="ECO:0007669"/>
    <property type="project" value="InterPro"/>
</dbReference>
<dbReference type="GO" id="GO:0006508">
    <property type="term" value="P:proteolysis"/>
    <property type="evidence" value="ECO:0007669"/>
    <property type="project" value="UniProtKB-KW"/>
</dbReference>
<dbReference type="CDD" id="cd03875">
    <property type="entry name" value="M28_Fxna_like"/>
    <property type="match status" value="1"/>
</dbReference>
<dbReference type="FunFam" id="3.40.630.10:FF:000057">
    <property type="entry name" value="Vacuolar membrane protease"/>
    <property type="match status" value="1"/>
</dbReference>
<dbReference type="Gene3D" id="3.40.630.10">
    <property type="entry name" value="Zn peptidases"/>
    <property type="match status" value="1"/>
</dbReference>
<dbReference type="InterPro" id="IPR048024">
    <property type="entry name" value="Fxna-like_M28_dom"/>
</dbReference>
<dbReference type="InterPro" id="IPR045175">
    <property type="entry name" value="M28_fam"/>
</dbReference>
<dbReference type="InterPro" id="IPR007484">
    <property type="entry name" value="Peptidase_M28"/>
</dbReference>
<dbReference type="InterPro" id="IPR053975">
    <property type="entry name" value="PFF1_C"/>
</dbReference>
<dbReference type="InterPro" id="IPR053976">
    <property type="entry name" value="PFF1_TM"/>
</dbReference>
<dbReference type="PANTHER" id="PTHR12147">
    <property type="entry name" value="METALLOPEPTIDASE M28 FAMILY MEMBER"/>
    <property type="match status" value="1"/>
</dbReference>
<dbReference type="PANTHER" id="PTHR12147:SF58">
    <property type="entry name" value="VACUOLAR MEMBRANE PROTEASE"/>
    <property type="match status" value="1"/>
</dbReference>
<dbReference type="Pfam" id="PF04389">
    <property type="entry name" value="Peptidase_M28"/>
    <property type="match status" value="1"/>
</dbReference>
<dbReference type="Pfam" id="PF22250">
    <property type="entry name" value="PFF1_C"/>
    <property type="match status" value="1"/>
</dbReference>
<dbReference type="Pfam" id="PF22251">
    <property type="entry name" value="PFF1_TM"/>
    <property type="match status" value="2"/>
</dbReference>
<dbReference type="SUPFAM" id="SSF53187">
    <property type="entry name" value="Zn-dependent exopeptidases"/>
    <property type="match status" value="1"/>
</dbReference>